<gene>
    <name evidence="1" type="primary">engB</name>
    <name type="ordered locus">ACIAD3228</name>
</gene>
<evidence type="ECO:0000255" key="1">
    <source>
        <dbReference type="HAMAP-Rule" id="MF_00321"/>
    </source>
</evidence>
<evidence type="ECO:0000256" key="2">
    <source>
        <dbReference type="SAM" id="MobiDB-lite"/>
    </source>
</evidence>
<evidence type="ECO:0000305" key="3"/>
<sequence>MSAPKLSLCVEDTGYEIAFAGRSNAGKSSAINSLTNQKQLARASKKPGRTQMINFFSLGNPDQRLVDLPGYGYAAVPEDMKRIWQKELENYLIHRQSLQGLVLLMDIRHPLQHFDTMMLEWAHSRKLFVHILLTKADKLNRGPANQVLLDVKQTLKKMKLSFSIQLFSSLNKQGLEELASVMAGRLNYTLDKTLDFDLDAIPEATEDDLNDELMDQDETSEFNTENIDDHLDQEPKI</sequence>
<dbReference type="EMBL" id="CR543861">
    <property type="protein sequence ID" value="CAG69911.1"/>
    <property type="status" value="ALT_INIT"/>
    <property type="molecule type" value="Genomic_DNA"/>
</dbReference>
<dbReference type="SMR" id="Q6F7Q4"/>
<dbReference type="STRING" id="202950.GCA_001485005_02927"/>
<dbReference type="KEGG" id="aci:ACIAD3228"/>
<dbReference type="eggNOG" id="COG0218">
    <property type="taxonomic scope" value="Bacteria"/>
</dbReference>
<dbReference type="HOGENOM" id="CLU_033732_1_0_6"/>
<dbReference type="Proteomes" id="UP000000430">
    <property type="component" value="Chromosome"/>
</dbReference>
<dbReference type="GO" id="GO:0005829">
    <property type="term" value="C:cytosol"/>
    <property type="evidence" value="ECO:0007669"/>
    <property type="project" value="TreeGrafter"/>
</dbReference>
<dbReference type="GO" id="GO:0005525">
    <property type="term" value="F:GTP binding"/>
    <property type="evidence" value="ECO:0007669"/>
    <property type="project" value="UniProtKB-UniRule"/>
</dbReference>
<dbReference type="GO" id="GO:0046872">
    <property type="term" value="F:metal ion binding"/>
    <property type="evidence" value="ECO:0007669"/>
    <property type="project" value="UniProtKB-KW"/>
</dbReference>
<dbReference type="GO" id="GO:0000917">
    <property type="term" value="P:division septum assembly"/>
    <property type="evidence" value="ECO:0007669"/>
    <property type="project" value="UniProtKB-KW"/>
</dbReference>
<dbReference type="CDD" id="cd01876">
    <property type="entry name" value="YihA_EngB"/>
    <property type="match status" value="1"/>
</dbReference>
<dbReference type="FunFam" id="3.40.50.300:FF:000098">
    <property type="entry name" value="Probable GTP-binding protein EngB"/>
    <property type="match status" value="1"/>
</dbReference>
<dbReference type="Gene3D" id="3.40.50.300">
    <property type="entry name" value="P-loop containing nucleotide triphosphate hydrolases"/>
    <property type="match status" value="1"/>
</dbReference>
<dbReference type="HAMAP" id="MF_00321">
    <property type="entry name" value="GTPase_EngB"/>
    <property type="match status" value="1"/>
</dbReference>
<dbReference type="InterPro" id="IPR030393">
    <property type="entry name" value="G_ENGB_dom"/>
</dbReference>
<dbReference type="InterPro" id="IPR006073">
    <property type="entry name" value="GTP-bd"/>
</dbReference>
<dbReference type="InterPro" id="IPR019987">
    <property type="entry name" value="GTP-bd_ribosome_bio_YsxC"/>
</dbReference>
<dbReference type="InterPro" id="IPR027417">
    <property type="entry name" value="P-loop_NTPase"/>
</dbReference>
<dbReference type="NCBIfam" id="TIGR03598">
    <property type="entry name" value="GTPase_YsxC"/>
    <property type="match status" value="1"/>
</dbReference>
<dbReference type="PANTHER" id="PTHR11649:SF13">
    <property type="entry name" value="ENGB-TYPE G DOMAIN-CONTAINING PROTEIN"/>
    <property type="match status" value="1"/>
</dbReference>
<dbReference type="PANTHER" id="PTHR11649">
    <property type="entry name" value="MSS1/TRME-RELATED GTP-BINDING PROTEIN"/>
    <property type="match status" value="1"/>
</dbReference>
<dbReference type="Pfam" id="PF01926">
    <property type="entry name" value="MMR_HSR1"/>
    <property type="match status" value="1"/>
</dbReference>
<dbReference type="SUPFAM" id="SSF52540">
    <property type="entry name" value="P-loop containing nucleoside triphosphate hydrolases"/>
    <property type="match status" value="1"/>
</dbReference>
<dbReference type="PROSITE" id="PS51706">
    <property type="entry name" value="G_ENGB"/>
    <property type="match status" value="1"/>
</dbReference>
<organism>
    <name type="scientific">Acinetobacter baylyi (strain ATCC 33305 / BD413 / ADP1)</name>
    <dbReference type="NCBI Taxonomy" id="62977"/>
    <lineage>
        <taxon>Bacteria</taxon>
        <taxon>Pseudomonadati</taxon>
        <taxon>Pseudomonadota</taxon>
        <taxon>Gammaproteobacteria</taxon>
        <taxon>Moraxellales</taxon>
        <taxon>Moraxellaceae</taxon>
        <taxon>Acinetobacter</taxon>
    </lineage>
</organism>
<keyword id="KW-0131">Cell cycle</keyword>
<keyword id="KW-0132">Cell division</keyword>
<keyword id="KW-0342">GTP-binding</keyword>
<keyword id="KW-0460">Magnesium</keyword>
<keyword id="KW-0479">Metal-binding</keyword>
<keyword id="KW-0547">Nucleotide-binding</keyword>
<keyword id="KW-0717">Septation</keyword>
<protein>
    <recommendedName>
        <fullName evidence="1">Probable GTP-binding protein EngB</fullName>
    </recommendedName>
</protein>
<proteinExistence type="inferred from homology"/>
<accession>Q6F7Q4</accession>
<comment type="function">
    <text evidence="1">Necessary for normal cell division and for the maintenance of normal septation.</text>
</comment>
<comment type="cofactor">
    <cofactor evidence="1">
        <name>Mg(2+)</name>
        <dbReference type="ChEBI" id="CHEBI:18420"/>
    </cofactor>
</comment>
<comment type="similarity">
    <text evidence="1">Belongs to the TRAFAC class TrmE-Era-EngA-EngB-Septin-like GTPase superfamily. EngB GTPase family.</text>
</comment>
<comment type="sequence caution" evidence="3">
    <conflict type="erroneous initiation">
        <sequence resource="EMBL-CDS" id="CAG69911"/>
    </conflict>
</comment>
<name>ENGB_ACIAD</name>
<reference key="1">
    <citation type="journal article" date="2004" name="Nucleic Acids Res.">
        <title>Unique features revealed by the genome sequence of Acinetobacter sp. ADP1, a versatile and naturally transformation competent bacterium.</title>
        <authorList>
            <person name="Barbe V."/>
            <person name="Vallenet D."/>
            <person name="Fonknechten N."/>
            <person name="Kreimeyer A."/>
            <person name="Oztas S."/>
            <person name="Labarre L."/>
            <person name="Cruveiller S."/>
            <person name="Robert C."/>
            <person name="Duprat S."/>
            <person name="Wincker P."/>
            <person name="Ornston L.N."/>
            <person name="Weissenbach J."/>
            <person name="Marliere P."/>
            <person name="Cohen G.N."/>
            <person name="Medigue C."/>
        </authorList>
    </citation>
    <scope>NUCLEOTIDE SEQUENCE [LARGE SCALE GENOMIC DNA]</scope>
    <source>
        <strain>ATCC 33305 / BD413 / ADP1</strain>
    </source>
</reference>
<feature type="chain" id="PRO_0000266804" description="Probable GTP-binding protein EngB">
    <location>
        <begin position="1"/>
        <end position="237"/>
    </location>
</feature>
<feature type="domain" description="EngB-type G" evidence="1">
    <location>
        <begin position="13"/>
        <end position="188"/>
    </location>
</feature>
<feature type="region of interest" description="Disordered" evidence="2">
    <location>
        <begin position="207"/>
        <end position="237"/>
    </location>
</feature>
<feature type="compositionally biased region" description="Acidic residues" evidence="2">
    <location>
        <begin position="207"/>
        <end position="220"/>
    </location>
</feature>
<feature type="compositionally biased region" description="Basic and acidic residues" evidence="2">
    <location>
        <begin position="227"/>
        <end position="237"/>
    </location>
</feature>
<feature type="binding site" evidence="1">
    <location>
        <begin position="21"/>
        <end position="28"/>
    </location>
    <ligand>
        <name>GTP</name>
        <dbReference type="ChEBI" id="CHEBI:37565"/>
    </ligand>
</feature>
<feature type="binding site" evidence="1">
    <location>
        <position position="28"/>
    </location>
    <ligand>
        <name>Mg(2+)</name>
        <dbReference type="ChEBI" id="CHEBI:18420"/>
    </ligand>
</feature>
<feature type="binding site" evidence="1">
    <location>
        <begin position="48"/>
        <end position="52"/>
    </location>
    <ligand>
        <name>GTP</name>
        <dbReference type="ChEBI" id="CHEBI:37565"/>
    </ligand>
</feature>
<feature type="binding site" evidence="1">
    <location>
        <position position="50"/>
    </location>
    <ligand>
        <name>Mg(2+)</name>
        <dbReference type="ChEBI" id="CHEBI:18420"/>
    </ligand>
</feature>
<feature type="binding site" evidence="1">
    <location>
        <begin position="67"/>
        <end position="70"/>
    </location>
    <ligand>
        <name>GTP</name>
        <dbReference type="ChEBI" id="CHEBI:37565"/>
    </ligand>
</feature>
<feature type="binding site" evidence="1">
    <location>
        <begin position="134"/>
        <end position="137"/>
    </location>
    <ligand>
        <name>GTP</name>
        <dbReference type="ChEBI" id="CHEBI:37565"/>
    </ligand>
</feature>
<feature type="binding site" evidence="1">
    <location>
        <begin position="167"/>
        <end position="169"/>
    </location>
    <ligand>
        <name>GTP</name>
        <dbReference type="ChEBI" id="CHEBI:37565"/>
    </ligand>
</feature>